<feature type="chain" id="PRO_0000380470" description="DNA ligase">
    <location>
        <begin position="1"/>
        <end position="668"/>
    </location>
</feature>
<feature type="domain" description="BRCT" evidence="1">
    <location>
        <begin position="591"/>
        <end position="668"/>
    </location>
</feature>
<feature type="active site" description="N6-AMP-lysine intermediate" evidence="1">
    <location>
        <position position="113"/>
    </location>
</feature>
<feature type="binding site" evidence="1">
    <location>
        <begin position="32"/>
        <end position="36"/>
    </location>
    <ligand>
        <name>NAD(+)</name>
        <dbReference type="ChEBI" id="CHEBI:57540"/>
    </ligand>
</feature>
<feature type="binding site" evidence="1">
    <location>
        <begin position="81"/>
        <end position="82"/>
    </location>
    <ligand>
        <name>NAD(+)</name>
        <dbReference type="ChEBI" id="CHEBI:57540"/>
    </ligand>
</feature>
<feature type="binding site" evidence="1">
    <location>
        <position position="111"/>
    </location>
    <ligand>
        <name>NAD(+)</name>
        <dbReference type="ChEBI" id="CHEBI:57540"/>
    </ligand>
</feature>
<feature type="binding site" evidence="1">
    <location>
        <position position="134"/>
    </location>
    <ligand>
        <name>NAD(+)</name>
        <dbReference type="ChEBI" id="CHEBI:57540"/>
    </ligand>
</feature>
<feature type="binding site" evidence="1">
    <location>
        <position position="171"/>
    </location>
    <ligand>
        <name>NAD(+)</name>
        <dbReference type="ChEBI" id="CHEBI:57540"/>
    </ligand>
</feature>
<feature type="binding site" evidence="1">
    <location>
        <position position="290"/>
    </location>
    <ligand>
        <name>NAD(+)</name>
        <dbReference type="ChEBI" id="CHEBI:57540"/>
    </ligand>
</feature>
<feature type="binding site" evidence="1">
    <location>
        <position position="314"/>
    </location>
    <ligand>
        <name>NAD(+)</name>
        <dbReference type="ChEBI" id="CHEBI:57540"/>
    </ligand>
</feature>
<feature type="binding site" evidence="1">
    <location>
        <position position="408"/>
    </location>
    <ligand>
        <name>Zn(2+)</name>
        <dbReference type="ChEBI" id="CHEBI:29105"/>
    </ligand>
</feature>
<feature type="binding site" evidence="1">
    <location>
        <position position="411"/>
    </location>
    <ligand>
        <name>Zn(2+)</name>
        <dbReference type="ChEBI" id="CHEBI:29105"/>
    </ligand>
</feature>
<feature type="binding site" evidence="1">
    <location>
        <position position="426"/>
    </location>
    <ligand>
        <name>Zn(2+)</name>
        <dbReference type="ChEBI" id="CHEBI:29105"/>
    </ligand>
</feature>
<feature type="binding site" evidence="1">
    <location>
        <position position="432"/>
    </location>
    <ligand>
        <name>Zn(2+)</name>
        <dbReference type="ChEBI" id="CHEBI:29105"/>
    </ligand>
</feature>
<reference key="1">
    <citation type="journal article" date="2008" name="PLoS ONE">
        <title>Environmental adaptation: genomic analysis of the piezotolerant and psychrotolerant deep-sea iron reducing bacterium Shewanella piezotolerans WP3.</title>
        <authorList>
            <person name="Wang F."/>
            <person name="Wang J."/>
            <person name="Jian H."/>
            <person name="Zhang B."/>
            <person name="Li S."/>
            <person name="Wang F."/>
            <person name="Zeng X."/>
            <person name="Gao L."/>
            <person name="Bartlett D.H."/>
            <person name="Yu J."/>
            <person name="Hu S."/>
            <person name="Xiao X."/>
        </authorList>
    </citation>
    <scope>NUCLEOTIDE SEQUENCE [LARGE SCALE GENOMIC DNA]</scope>
    <source>
        <strain>WP3 / JCM 13877</strain>
    </source>
</reference>
<organism>
    <name type="scientific">Shewanella piezotolerans (strain WP3 / JCM 13877)</name>
    <dbReference type="NCBI Taxonomy" id="225849"/>
    <lineage>
        <taxon>Bacteria</taxon>
        <taxon>Pseudomonadati</taxon>
        <taxon>Pseudomonadota</taxon>
        <taxon>Gammaproteobacteria</taxon>
        <taxon>Alteromonadales</taxon>
        <taxon>Shewanellaceae</taxon>
        <taxon>Shewanella</taxon>
    </lineage>
</organism>
<gene>
    <name evidence="1" type="primary">ligA</name>
    <name type="ordered locus">swp_1968</name>
</gene>
<accession>B8CN91</accession>
<dbReference type="EC" id="6.5.1.2" evidence="1"/>
<dbReference type="EMBL" id="CP000472">
    <property type="protein sequence ID" value="ACJ28725.1"/>
    <property type="molecule type" value="Genomic_DNA"/>
</dbReference>
<dbReference type="RefSeq" id="WP_020912100.1">
    <property type="nucleotide sequence ID" value="NC_011566.1"/>
</dbReference>
<dbReference type="SMR" id="B8CN91"/>
<dbReference type="STRING" id="225849.swp_1968"/>
<dbReference type="KEGG" id="swp:swp_1968"/>
<dbReference type="eggNOG" id="COG0272">
    <property type="taxonomic scope" value="Bacteria"/>
</dbReference>
<dbReference type="HOGENOM" id="CLU_007764_2_1_6"/>
<dbReference type="OrthoDB" id="9759736at2"/>
<dbReference type="Proteomes" id="UP000000753">
    <property type="component" value="Chromosome"/>
</dbReference>
<dbReference type="GO" id="GO:0005829">
    <property type="term" value="C:cytosol"/>
    <property type="evidence" value="ECO:0007669"/>
    <property type="project" value="TreeGrafter"/>
</dbReference>
<dbReference type="GO" id="GO:0003677">
    <property type="term" value="F:DNA binding"/>
    <property type="evidence" value="ECO:0007669"/>
    <property type="project" value="InterPro"/>
</dbReference>
<dbReference type="GO" id="GO:0003911">
    <property type="term" value="F:DNA ligase (NAD+) activity"/>
    <property type="evidence" value="ECO:0007669"/>
    <property type="project" value="UniProtKB-UniRule"/>
</dbReference>
<dbReference type="GO" id="GO:0046872">
    <property type="term" value="F:metal ion binding"/>
    <property type="evidence" value="ECO:0007669"/>
    <property type="project" value="UniProtKB-KW"/>
</dbReference>
<dbReference type="GO" id="GO:0006281">
    <property type="term" value="P:DNA repair"/>
    <property type="evidence" value="ECO:0007669"/>
    <property type="project" value="UniProtKB-KW"/>
</dbReference>
<dbReference type="GO" id="GO:0006260">
    <property type="term" value="P:DNA replication"/>
    <property type="evidence" value="ECO:0007669"/>
    <property type="project" value="UniProtKB-KW"/>
</dbReference>
<dbReference type="CDD" id="cd17748">
    <property type="entry name" value="BRCT_DNA_ligase_like"/>
    <property type="match status" value="1"/>
</dbReference>
<dbReference type="CDD" id="cd00114">
    <property type="entry name" value="LIGANc"/>
    <property type="match status" value="1"/>
</dbReference>
<dbReference type="FunFam" id="1.10.150.20:FF:000006">
    <property type="entry name" value="DNA ligase"/>
    <property type="match status" value="1"/>
</dbReference>
<dbReference type="FunFam" id="1.10.150.20:FF:000007">
    <property type="entry name" value="DNA ligase"/>
    <property type="match status" value="1"/>
</dbReference>
<dbReference type="FunFam" id="1.10.287.610:FF:000002">
    <property type="entry name" value="DNA ligase"/>
    <property type="match status" value="1"/>
</dbReference>
<dbReference type="FunFam" id="2.40.50.140:FF:000012">
    <property type="entry name" value="DNA ligase"/>
    <property type="match status" value="1"/>
</dbReference>
<dbReference type="FunFam" id="3.30.470.30:FF:000001">
    <property type="entry name" value="DNA ligase"/>
    <property type="match status" value="1"/>
</dbReference>
<dbReference type="FunFam" id="6.20.10.30:FF:000001">
    <property type="entry name" value="DNA ligase"/>
    <property type="match status" value="1"/>
</dbReference>
<dbReference type="Gene3D" id="6.20.10.30">
    <property type="match status" value="1"/>
</dbReference>
<dbReference type="Gene3D" id="1.10.150.20">
    <property type="entry name" value="5' to 3' exonuclease, C-terminal subdomain"/>
    <property type="match status" value="2"/>
</dbReference>
<dbReference type="Gene3D" id="3.40.50.10190">
    <property type="entry name" value="BRCT domain"/>
    <property type="match status" value="1"/>
</dbReference>
<dbReference type="Gene3D" id="3.30.470.30">
    <property type="entry name" value="DNA ligase/mRNA capping enzyme"/>
    <property type="match status" value="1"/>
</dbReference>
<dbReference type="Gene3D" id="1.10.287.610">
    <property type="entry name" value="Helix hairpin bin"/>
    <property type="match status" value="1"/>
</dbReference>
<dbReference type="Gene3D" id="2.40.50.140">
    <property type="entry name" value="Nucleic acid-binding proteins"/>
    <property type="match status" value="1"/>
</dbReference>
<dbReference type="HAMAP" id="MF_01588">
    <property type="entry name" value="DNA_ligase_A"/>
    <property type="match status" value="1"/>
</dbReference>
<dbReference type="InterPro" id="IPR001357">
    <property type="entry name" value="BRCT_dom"/>
</dbReference>
<dbReference type="InterPro" id="IPR036420">
    <property type="entry name" value="BRCT_dom_sf"/>
</dbReference>
<dbReference type="InterPro" id="IPR041663">
    <property type="entry name" value="DisA/LigA_HHH"/>
</dbReference>
<dbReference type="InterPro" id="IPR001679">
    <property type="entry name" value="DNA_ligase"/>
</dbReference>
<dbReference type="InterPro" id="IPR018239">
    <property type="entry name" value="DNA_ligase_AS"/>
</dbReference>
<dbReference type="InterPro" id="IPR033136">
    <property type="entry name" value="DNA_ligase_CS"/>
</dbReference>
<dbReference type="InterPro" id="IPR013839">
    <property type="entry name" value="DNAligase_adenylation"/>
</dbReference>
<dbReference type="InterPro" id="IPR013840">
    <property type="entry name" value="DNAligase_N"/>
</dbReference>
<dbReference type="InterPro" id="IPR003583">
    <property type="entry name" value="Hlx-hairpin-Hlx_DNA-bd_motif"/>
</dbReference>
<dbReference type="InterPro" id="IPR012340">
    <property type="entry name" value="NA-bd_OB-fold"/>
</dbReference>
<dbReference type="InterPro" id="IPR004150">
    <property type="entry name" value="NAD_DNA_ligase_OB"/>
</dbReference>
<dbReference type="InterPro" id="IPR010994">
    <property type="entry name" value="RuvA_2-like"/>
</dbReference>
<dbReference type="InterPro" id="IPR004149">
    <property type="entry name" value="Znf_DNAligase_C4"/>
</dbReference>
<dbReference type="NCBIfam" id="TIGR00575">
    <property type="entry name" value="dnlj"/>
    <property type="match status" value="1"/>
</dbReference>
<dbReference type="NCBIfam" id="NF005932">
    <property type="entry name" value="PRK07956.1"/>
    <property type="match status" value="1"/>
</dbReference>
<dbReference type="PANTHER" id="PTHR23389">
    <property type="entry name" value="CHROMOSOME TRANSMISSION FIDELITY FACTOR 18"/>
    <property type="match status" value="1"/>
</dbReference>
<dbReference type="PANTHER" id="PTHR23389:SF9">
    <property type="entry name" value="DNA LIGASE"/>
    <property type="match status" value="1"/>
</dbReference>
<dbReference type="Pfam" id="PF00533">
    <property type="entry name" value="BRCT"/>
    <property type="match status" value="1"/>
</dbReference>
<dbReference type="Pfam" id="PF01653">
    <property type="entry name" value="DNA_ligase_aden"/>
    <property type="match status" value="1"/>
</dbReference>
<dbReference type="Pfam" id="PF03120">
    <property type="entry name" value="DNA_ligase_OB"/>
    <property type="match status" value="1"/>
</dbReference>
<dbReference type="Pfam" id="PF03119">
    <property type="entry name" value="DNA_ligase_ZBD"/>
    <property type="match status" value="1"/>
</dbReference>
<dbReference type="Pfam" id="PF12826">
    <property type="entry name" value="HHH_2"/>
    <property type="match status" value="1"/>
</dbReference>
<dbReference type="Pfam" id="PF14520">
    <property type="entry name" value="HHH_5"/>
    <property type="match status" value="1"/>
</dbReference>
<dbReference type="Pfam" id="PF22745">
    <property type="entry name" value="Nlig-Ia"/>
    <property type="match status" value="1"/>
</dbReference>
<dbReference type="PIRSF" id="PIRSF001604">
    <property type="entry name" value="LigA"/>
    <property type="match status" value="1"/>
</dbReference>
<dbReference type="SMART" id="SM00292">
    <property type="entry name" value="BRCT"/>
    <property type="match status" value="1"/>
</dbReference>
<dbReference type="SMART" id="SM00278">
    <property type="entry name" value="HhH1"/>
    <property type="match status" value="4"/>
</dbReference>
<dbReference type="SMART" id="SM00532">
    <property type="entry name" value="LIGANc"/>
    <property type="match status" value="1"/>
</dbReference>
<dbReference type="SUPFAM" id="SSF52113">
    <property type="entry name" value="BRCT domain"/>
    <property type="match status" value="1"/>
</dbReference>
<dbReference type="SUPFAM" id="SSF56091">
    <property type="entry name" value="DNA ligase/mRNA capping enzyme, catalytic domain"/>
    <property type="match status" value="1"/>
</dbReference>
<dbReference type="SUPFAM" id="SSF50249">
    <property type="entry name" value="Nucleic acid-binding proteins"/>
    <property type="match status" value="1"/>
</dbReference>
<dbReference type="SUPFAM" id="SSF47781">
    <property type="entry name" value="RuvA domain 2-like"/>
    <property type="match status" value="1"/>
</dbReference>
<dbReference type="PROSITE" id="PS50172">
    <property type="entry name" value="BRCT"/>
    <property type="match status" value="1"/>
</dbReference>
<dbReference type="PROSITE" id="PS01055">
    <property type="entry name" value="DNA_LIGASE_N1"/>
    <property type="match status" value="1"/>
</dbReference>
<dbReference type="PROSITE" id="PS01056">
    <property type="entry name" value="DNA_LIGASE_N2"/>
    <property type="match status" value="1"/>
</dbReference>
<protein>
    <recommendedName>
        <fullName evidence="1">DNA ligase</fullName>
        <ecNumber evidence="1">6.5.1.2</ecNumber>
    </recommendedName>
    <alternativeName>
        <fullName evidence="1">Polydeoxyribonucleotide synthase [NAD(+)]</fullName>
    </alternativeName>
</protein>
<sequence length="668" mass="72967">MHANELEILELTQQLNLHNYHYYVDDNPTIPDVEYDRLLKRLIELETQSPEFAKADSPTQRVGGEALAKFEQITHLKPMLSLDNVFDETEFNGFHSRITDKVGTALSYCCEPKLDGLAVSIVYRDGVFERAATRGDGQTGENITENVRTIKSIPLKLRGDNFPPLVEVRGEVIMPHKAFNALNERARAKGEKLFVNPRNAAAGSLRQLDSKITASRALGFYAYALGVVEPESWELADSHYGQLEQLRSWGVPVSQEVKVCDSVTEVMDYYNDIQQRRSSLDFEIDGVVLKVNQIAHQLSLGFVAKAPRWATAFKFPAQEEMTLLEGVDFQVGRTGAVTPVARLKPVFVGGVTVSNATLHNADEIARLGVKVGDTIIIRRAGDVIPQIVAIVADKRPDDAQDIVFPERCPVCDSEVERIEGEAVARCSGGLFCEAQRKEAIKHFASRKALDIDGMGDKVVEQLIDKELVESPADLFKLTASAMTMLERMGMKSATKLVAAIEVAKETTFARFLYALGIREVGEATAANLAAYFKTLDALKGASAEEFIKVDDVGAIVAAHLAHFLAQPHNLEVIDKLIAVGVSWPAIEEVAEEDLSLKGQTWVLTGTLTQLNRNDAKAQLQALGAKVAGSVSKNTDCLVAGAAAGSKLTKAQELGVKVIDEEALIAILS</sequence>
<name>DNLJ_SHEPW</name>
<keyword id="KW-0227">DNA damage</keyword>
<keyword id="KW-0234">DNA repair</keyword>
<keyword id="KW-0235">DNA replication</keyword>
<keyword id="KW-0436">Ligase</keyword>
<keyword id="KW-0460">Magnesium</keyword>
<keyword id="KW-0464">Manganese</keyword>
<keyword id="KW-0479">Metal-binding</keyword>
<keyword id="KW-0520">NAD</keyword>
<keyword id="KW-0862">Zinc</keyword>
<proteinExistence type="inferred from homology"/>
<comment type="function">
    <text evidence="1">DNA ligase that catalyzes the formation of phosphodiester linkages between 5'-phosphoryl and 3'-hydroxyl groups in double-stranded DNA using NAD as a coenzyme and as the energy source for the reaction. It is essential for DNA replication and repair of damaged DNA.</text>
</comment>
<comment type="catalytic activity">
    <reaction evidence="1">
        <text>NAD(+) + (deoxyribonucleotide)n-3'-hydroxyl + 5'-phospho-(deoxyribonucleotide)m = (deoxyribonucleotide)n+m + AMP + beta-nicotinamide D-nucleotide.</text>
        <dbReference type="EC" id="6.5.1.2"/>
    </reaction>
</comment>
<comment type="cofactor">
    <cofactor evidence="1">
        <name>Mg(2+)</name>
        <dbReference type="ChEBI" id="CHEBI:18420"/>
    </cofactor>
    <cofactor evidence="1">
        <name>Mn(2+)</name>
        <dbReference type="ChEBI" id="CHEBI:29035"/>
    </cofactor>
</comment>
<comment type="similarity">
    <text evidence="1">Belongs to the NAD-dependent DNA ligase family. LigA subfamily.</text>
</comment>
<evidence type="ECO:0000255" key="1">
    <source>
        <dbReference type="HAMAP-Rule" id="MF_01588"/>
    </source>
</evidence>